<comment type="function">
    <text evidence="1">Produces ATP from ADP in the presence of a proton gradient across the membrane. The gamma chain is believed to be important in regulating ATPase activity and the flow of protons through the CF(0) complex.</text>
</comment>
<comment type="subunit">
    <text evidence="1">F-type ATPases have 2 components, CF(1) - the catalytic core - and CF(0) - the membrane proton channel. CF(1) has five subunits: alpha(3), beta(3), gamma(1), delta(1), epsilon(1). CF(0) has three main subunits: a, b and c.</text>
</comment>
<comment type="subcellular location">
    <subcellularLocation>
        <location evidence="1">Cell inner membrane</location>
        <topology evidence="1">Peripheral membrane protein</topology>
    </subcellularLocation>
</comment>
<comment type="similarity">
    <text evidence="1">Belongs to the ATPase gamma chain family.</text>
</comment>
<sequence length="289" mass="32012">MASTKEIRSKIKSVQNTRKITKAMEMVAASKMRRAQERMRNARPYAEKIREIVANLSKANPGFRPAYMATREVKKVGTILVTTDKGLCGGLNTNVLRLIANQVRDLQEKNIEIAYTAIGSKGLQFLNRSKAKLISQTIQIGDIPHMDVLIGAIVSQLEAFERGEIDAVYLAYTRFVNAMKQEPVLEKLLPLESEALTPQEKTGNSWDYICEPDAESILNGLLKRYVEAMIYQAVAENMASEQSARMVSMKAASDNAKNVIGELQLDYNKTRQAAITKELSEIVGGAAAV</sequence>
<reference key="1">
    <citation type="journal article" date="2013" name="Proc. Natl. Acad. Sci. U.S.A.">
        <title>Polynucleobacter necessarius, a model for genome reduction in both free-living and symbiotic bacteria.</title>
        <authorList>
            <person name="Boscaro V."/>
            <person name="Felletti M."/>
            <person name="Vannini C."/>
            <person name="Ackerman M.S."/>
            <person name="Chain P.S."/>
            <person name="Malfatti S."/>
            <person name="Vergez L.M."/>
            <person name="Shin M."/>
            <person name="Doak T.G."/>
            <person name="Lynch M."/>
            <person name="Petroni G."/>
        </authorList>
    </citation>
    <scope>NUCLEOTIDE SEQUENCE [LARGE SCALE GENOMIC DNA]</scope>
    <source>
        <strain>STIR1</strain>
    </source>
</reference>
<accession>B1XSD3</accession>
<evidence type="ECO:0000255" key="1">
    <source>
        <dbReference type="HAMAP-Rule" id="MF_00815"/>
    </source>
</evidence>
<protein>
    <recommendedName>
        <fullName evidence="1">ATP synthase gamma chain</fullName>
    </recommendedName>
    <alternativeName>
        <fullName evidence="1">ATP synthase F1 sector gamma subunit</fullName>
    </alternativeName>
    <alternativeName>
        <fullName evidence="1">F-ATPase gamma subunit</fullName>
    </alternativeName>
</protein>
<dbReference type="EMBL" id="CP001010">
    <property type="protein sequence ID" value="ACB43351.1"/>
    <property type="molecule type" value="Genomic_DNA"/>
</dbReference>
<dbReference type="SMR" id="B1XSD3"/>
<dbReference type="STRING" id="452638.Pnec_0021"/>
<dbReference type="KEGG" id="pne:Pnec_0021"/>
<dbReference type="eggNOG" id="COG0224">
    <property type="taxonomic scope" value="Bacteria"/>
</dbReference>
<dbReference type="HOGENOM" id="CLU_050669_0_1_4"/>
<dbReference type="OrthoDB" id="9812769at2"/>
<dbReference type="GO" id="GO:0005886">
    <property type="term" value="C:plasma membrane"/>
    <property type="evidence" value="ECO:0007669"/>
    <property type="project" value="UniProtKB-SubCell"/>
</dbReference>
<dbReference type="GO" id="GO:0045259">
    <property type="term" value="C:proton-transporting ATP synthase complex"/>
    <property type="evidence" value="ECO:0007669"/>
    <property type="project" value="UniProtKB-KW"/>
</dbReference>
<dbReference type="GO" id="GO:0005524">
    <property type="term" value="F:ATP binding"/>
    <property type="evidence" value="ECO:0007669"/>
    <property type="project" value="UniProtKB-UniRule"/>
</dbReference>
<dbReference type="GO" id="GO:0046933">
    <property type="term" value="F:proton-transporting ATP synthase activity, rotational mechanism"/>
    <property type="evidence" value="ECO:0007669"/>
    <property type="project" value="UniProtKB-UniRule"/>
</dbReference>
<dbReference type="GO" id="GO:0042777">
    <property type="term" value="P:proton motive force-driven plasma membrane ATP synthesis"/>
    <property type="evidence" value="ECO:0007669"/>
    <property type="project" value="UniProtKB-UniRule"/>
</dbReference>
<dbReference type="CDD" id="cd12151">
    <property type="entry name" value="F1-ATPase_gamma"/>
    <property type="match status" value="1"/>
</dbReference>
<dbReference type="FunFam" id="1.10.287.80:FF:000005">
    <property type="entry name" value="ATP synthase gamma chain"/>
    <property type="match status" value="1"/>
</dbReference>
<dbReference type="Gene3D" id="3.40.1380.10">
    <property type="match status" value="1"/>
</dbReference>
<dbReference type="Gene3D" id="1.10.287.80">
    <property type="entry name" value="ATP synthase, gamma subunit, helix hairpin domain"/>
    <property type="match status" value="1"/>
</dbReference>
<dbReference type="HAMAP" id="MF_00815">
    <property type="entry name" value="ATP_synth_gamma_bact"/>
    <property type="match status" value="1"/>
</dbReference>
<dbReference type="InterPro" id="IPR035968">
    <property type="entry name" value="ATP_synth_F1_ATPase_gsu"/>
</dbReference>
<dbReference type="InterPro" id="IPR000131">
    <property type="entry name" value="ATP_synth_F1_gsu"/>
</dbReference>
<dbReference type="InterPro" id="IPR023632">
    <property type="entry name" value="ATP_synth_F1_gsu_CS"/>
</dbReference>
<dbReference type="NCBIfam" id="TIGR01146">
    <property type="entry name" value="ATPsyn_F1gamma"/>
    <property type="match status" value="1"/>
</dbReference>
<dbReference type="NCBIfam" id="NF004144">
    <property type="entry name" value="PRK05621.1-1"/>
    <property type="match status" value="1"/>
</dbReference>
<dbReference type="PANTHER" id="PTHR11693">
    <property type="entry name" value="ATP SYNTHASE GAMMA CHAIN"/>
    <property type="match status" value="1"/>
</dbReference>
<dbReference type="PANTHER" id="PTHR11693:SF22">
    <property type="entry name" value="ATP SYNTHASE SUBUNIT GAMMA, MITOCHONDRIAL"/>
    <property type="match status" value="1"/>
</dbReference>
<dbReference type="Pfam" id="PF00231">
    <property type="entry name" value="ATP-synt"/>
    <property type="match status" value="1"/>
</dbReference>
<dbReference type="PRINTS" id="PR00126">
    <property type="entry name" value="ATPASEGAMMA"/>
</dbReference>
<dbReference type="SUPFAM" id="SSF52943">
    <property type="entry name" value="ATP synthase (F1-ATPase), gamma subunit"/>
    <property type="match status" value="1"/>
</dbReference>
<dbReference type="PROSITE" id="PS00153">
    <property type="entry name" value="ATPASE_GAMMA"/>
    <property type="match status" value="1"/>
</dbReference>
<feature type="chain" id="PRO_1000134187" description="ATP synthase gamma chain">
    <location>
        <begin position="1"/>
        <end position="289"/>
    </location>
</feature>
<name>ATPG_POLNS</name>
<keyword id="KW-0066">ATP synthesis</keyword>
<keyword id="KW-0997">Cell inner membrane</keyword>
<keyword id="KW-1003">Cell membrane</keyword>
<keyword id="KW-0139">CF(1)</keyword>
<keyword id="KW-0375">Hydrogen ion transport</keyword>
<keyword id="KW-0406">Ion transport</keyword>
<keyword id="KW-0472">Membrane</keyword>
<keyword id="KW-0813">Transport</keyword>
<organism>
    <name type="scientific">Polynucleobacter necessarius subsp. necessarius (strain STIR1)</name>
    <dbReference type="NCBI Taxonomy" id="452638"/>
    <lineage>
        <taxon>Bacteria</taxon>
        <taxon>Pseudomonadati</taxon>
        <taxon>Pseudomonadota</taxon>
        <taxon>Betaproteobacteria</taxon>
        <taxon>Burkholderiales</taxon>
        <taxon>Burkholderiaceae</taxon>
        <taxon>Polynucleobacter</taxon>
    </lineage>
</organism>
<gene>
    <name evidence="1" type="primary">atpG</name>
    <name type="ordered locus">Pnec_0021</name>
</gene>
<proteinExistence type="inferred from homology"/>